<feature type="transit peptide" description="Chloroplast" evidence="2">
    <location>
        <begin position="1"/>
        <end position="35"/>
    </location>
</feature>
<feature type="chain" id="PRO_0000013449" description="Histidinol-phosphate aminotransferase, chloroplastic">
    <location>
        <begin position="36"/>
        <end position="413"/>
    </location>
</feature>
<feature type="modified residue" description="N6-(pyridoxal phosphate)lysine" evidence="1">
    <location>
        <position position="273"/>
    </location>
</feature>
<sequence>MGVIELCNTSSICIGRAKPSCCSIERNQRRRIICMASSVPVQEESQQKQRVTGDAFIRPHLLKLSPYQPILPFEVLSTRLGRKPEDIVKLDANENPYGPPPEVIEALGAMKFPYIYPDPESRTLRAALAEDSGLESEYILAGCGADELIDLIMRCVLDPGDMIVDCPPTFTMYEFDAAVNGAHVIKVPRNPDFSLDVERIAEVVEHEKPKCIFLTSPNNPDGSIVDDETLLKILDLPILVILDEAYVEFSGMESKMKWVKKHENLIVLRTFSKRAGLAGLRVGYGAFPKSIIEFLWRAKQPYNVSVAAEVAACAALKNPTYLENVKVALVQERERLFNLLKEVPFLDPYPSYSNFILCKVTSGMDAKKLKEDLATMGVMIRHYNSKELKGYVRVSVGKPEHTEALMKCLKHFY</sequence>
<keyword id="KW-0028">Amino-acid biosynthesis</keyword>
<keyword id="KW-0032">Aminotransferase</keyword>
<keyword id="KW-0150">Chloroplast</keyword>
<keyword id="KW-0368">Histidine biosynthesis</keyword>
<keyword id="KW-0934">Plastid</keyword>
<keyword id="KW-0663">Pyridoxal phosphate</keyword>
<keyword id="KW-1185">Reference proteome</keyword>
<keyword id="KW-0808">Transferase</keyword>
<keyword id="KW-0809">Transit peptide</keyword>
<gene>
    <name type="primary">HPA</name>
</gene>
<organism>
    <name type="scientific">Nicotiana tabacum</name>
    <name type="common">Common tobacco</name>
    <dbReference type="NCBI Taxonomy" id="4097"/>
    <lineage>
        <taxon>Eukaryota</taxon>
        <taxon>Viridiplantae</taxon>
        <taxon>Streptophyta</taxon>
        <taxon>Embryophyta</taxon>
        <taxon>Tracheophyta</taxon>
        <taxon>Spermatophyta</taxon>
        <taxon>Magnoliopsida</taxon>
        <taxon>eudicotyledons</taxon>
        <taxon>Gunneridae</taxon>
        <taxon>Pentapetalae</taxon>
        <taxon>asterids</taxon>
        <taxon>lamiids</taxon>
        <taxon>Solanales</taxon>
        <taxon>Solanaceae</taxon>
        <taxon>Nicotianoideae</taxon>
        <taxon>Nicotianeae</taxon>
        <taxon>Nicotiana</taxon>
    </lineage>
</organism>
<accession>O82030</accession>
<reference key="1">
    <citation type="journal article" date="1998" name="Plant Mol. Biol.">
        <title>Molecular cloning and expression of a cDNA sequence encoding histidinol phosphate aminotransferase from Nicotiana tabacum.</title>
        <authorList>
            <person name="El Malki F."/>
            <person name="Frankard V."/>
            <person name="Jacobs M."/>
        </authorList>
    </citation>
    <scope>NUCLEOTIDE SEQUENCE [MRNA]</scope>
    <scope>TISSUE SPECIFICITY</scope>
    <source>
        <strain>cv. Petit Havana</strain>
        <tissue>Leaf</tissue>
    </source>
</reference>
<dbReference type="EC" id="2.6.1.9"/>
<dbReference type="EMBL" id="Y09204">
    <property type="protein sequence ID" value="CAA70403.1"/>
    <property type="molecule type" value="mRNA"/>
</dbReference>
<dbReference type="PIR" id="T03270">
    <property type="entry name" value="T03270"/>
</dbReference>
<dbReference type="SMR" id="O82030"/>
<dbReference type="STRING" id="4097.O82030"/>
<dbReference type="PaxDb" id="4097-O82030"/>
<dbReference type="GeneID" id="107823535"/>
<dbReference type="KEGG" id="nta:107823535"/>
<dbReference type="OMA" id="NFVQFGR"/>
<dbReference type="OrthoDB" id="2015537at2759"/>
<dbReference type="BRENDA" id="2.6.1.9">
    <property type="organism ID" value="3645"/>
</dbReference>
<dbReference type="UniPathway" id="UPA00031">
    <property type="reaction ID" value="UER00012"/>
</dbReference>
<dbReference type="Proteomes" id="UP000084051">
    <property type="component" value="Unplaced"/>
</dbReference>
<dbReference type="GO" id="GO:0009507">
    <property type="term" value="C:chloroplast"/>
    <property type="evidence" value="ECO:0007669"/>
    <property type="project" value="UniProtKB-SubCell"/>
</dbReference>
<dbReference type="GO" id="GO:0004400">
    <property type="term" value="F:histidinol-phosphate transaminase activity"/>
    <property type="evidence" value="ECO:0007669"/>
    <property type="project" value="UniProtKB-EC"/>
</dbReference>
<dbReference type="GO" id="GO:0030170">
    <property type="term" value="F:pyridoxal phosphate binding"/>
    <property type="evidence" value="ECO:0007669"/>
    <property type="project" value="InterPro"/>
</dbReference>
<dbReference type="GO" id="GO:0000105">
    <property type="term" value="P:L-histidine biosynthetic process"/>
    <property type="evidence" value="ECO:0007669"/>
    <property type="project" value="UniProtKB-UniPathway"/>
</dbReference>
<dbReference type="CDD" id="cd00609">
    <property type="entry name" value="AAT_like"/>
    <property type="match status" value="1"/>
</dbReference>
<dbReference type="Gene3D" id="3.90.1150.10">
    <property type="entry name" value="Aspartate Aminotransferase, domain 1"/>
    <property type="match status" value="1"/>
</dbReference>
<dbReference type="Gene3D" id="3.40.640.10">
    <property type="entry name" value="Type I PLP-dependent aspartate aminotransferase-like (Major domain)"/>
    <property type="match status" value="1"/>
</dbReference>
<dbReference type="HAMAP" id="MF_01023">
    <property type="entry name" value="HisC_aminotrans_2"/>
    <property type="match status" value="1"/>
</dbReference>
<dbReference type="InterPro" id="IPR004839">
    <property type="entry name" value="Aminotransferase_I/II_large"/>
</dbReference>
<dbReference type="InterPro" id="IPR005861">
    <property type="entry name" value="HisP_aminotrans"/>
</dbReference>
<dbReference type="InterPro" id="IPR015424">
    <property type="entry name" value="PyrdxlP-dep_Trfase"/>
</dbReference>
<dbReference type="InterPro" id="IPR015421">
    <property type="entry name" value="PyrdxlP-dep_Trfase_major"/>
</dbReference>
<dbReference type="InterPro" id="IPR015422">
    <property type="entry name" value="PyrdxlP-dep_Trfase_small"/>
</dbReference>
<dbReference type="NCBIfam" id="TIGR01141">
    <property type="entry name" value="hisC"/>
    <property type="match status" value="1"/>
</dbReference>
<dbReference type="PANTHER" id="PTHR42885:SF2">
    <property type="entry name" value="HISTIDINOL-PHOSPHATE AMINOTRANSFERASE"/>
    <property type="match status" value="1"/>
</dbReference>
<dbReference type="PANTHER" id="PTHR42885">
    <property type="entry name" value="HISTIDINOL-PHOSPHATE AMINOTRANSFERASE-RELATED"/>
    <property type="match status" value="1"/>
</dbReference>
<dbReference type="Pfam" id="PF00155">
    <property type="entry name" value="Aminotran_1_2"/>
    <property type="match status" value="1"/>
</dbReference>
<dbReference type="SUPFAM" id="SSF53383">
    <property type="entry name" value="PLP-dependent transferases"/>
    <property type="match status" value="1"/>
</dbReference>
<protein>
    <recommendedName>
        <fullName>Histidinol-phosphate aminotransferase, chloroplastic</fullName>
        <ecNumber>2.6.1.9</ecNumber>
    </recommendedName>
    <alternativeName>
        <fullName>Imidazole acetol-phosphate transaminase</fullName>
    </alternativeName>
</protein>
<proteinExistence type="evidence at transcript level"/>
<name>HIS8_TOBAC</name>
<evidence type="ECO:0000250" key="1"/>
<evidence type="ECO:0000255" key="2"/>
<evidence type="ECO:0000269" key="3">
    <source>
    </source>
</evidence>
<evidence type="ECO:0000305" key="4"/>
<comment type="catalytic activity">
    <reaction>
        <text>L-histidinol phosphate + 2-oxoglutarate = 3-(imidazol-4-yl)-2-oxopropyl phosphate + L-glutamate</text>
        <dbReference type="Rhea" id="RHEA:23744"/>
        <dbReference type="ChEBI" id="CHEBI:16810"/>
        <dbReference type="ChEBI" id="CHEBI:29985"/>
        <dbReference type="ChEBI" id="CHEBI:57766"/>
        <dbReference type="ChEBI" id="CHEBI:57980"/>
        <dbReference type="EC" id="2.6.1.9"/>
    </reaction>
</comment>
<comment type="cofactor">
    <cofactor evidence="1">
        <name>pyridoxal 5'-phosphate</name>
        <dbReference type="ChEBI" id="CHEBI:597326"/>
    </cofactor>
</comment>
<comment type="pathway">
    <text>Amino-acid biosynthesis; L-histidine biosynthesis; L-histidine from 5-phospho-alpha-D-ribose 1-diphosphate: step 7/9.</text>
</comment>
<comment type="subunit">
    <text evidence="1">Homodimer.</text>
</comment>
<comment type="subcellular location">
    <subcellularLocation>
        <location evidence="4">Plastid</location>
        <location evidence="4">Chloroplast</location>
    </subcellularLocation>
</comment>
<comment type="tissue specificity">
    <text evidence="3">Mainly expressed in green tissues.</text>
</comment>
<comment type="similarity">
    <text evidence="4">Belongs to the class-II pyridoxal-phosphate-dependent aminotransferase family. Histidinol-phosphate aminotransferase subfamily.</text>
</comment>